<protein>
    <recommendedName>
        <fullName evidence="1">tRNA dimethylallyltransferase</fullName>
        <ecNumber evidence="1">2.5.1.75</ecNumber>
    </recommendedName>
    <alternativeName>
        <fullName evidence="1">Dimethylallyl diphosphate:tRNA dimethylallyltransferase</fullName>
        <shortName evidence="1">DMAPP:tRNA dimethylallyltransferase</shortName>
        <shortName evidence="1">DMATase</shortName>
    </alternativeName>
    <alternativeName>
        <fullName evidence="1">Isopentenyl-diphosphate:tRNA isopentenyltransferase</fullName>
        <shortName evidence="1">IPP transferase</shortName>
        <shortName evidence="1">IPPT</shortName>
        <shortName evidence="1">IPTase</shortName>
    </alternativeName>
</protein>
<sequence length="305" mass="34749">MSKIPVIVIVGPTAVGKTSLSIELAKKLDGEIISGDSMQVYRGLDIGTAKITPEEMDGIKHYLIDVTNPSEPFTAAKFQIETRKCIETIHQAGRLPIIVGGTGLYIQSVFYDYDFGNVSEDKAYRAELEQLDKTVLWQMLEQKDPESAAQIHENNKRRVIRALEVMHLTGKPFSEYQVNNVLNDRYQPLFLGLDLDRALLYERINQRVNLMFEEGLVTEAKKLYEQHLVDVPAVRGIGYKELFPYFEGKSSLEEAKELIQKNSRHFAKRQLTWFRNRMDIDWIQAGVSSTESEALNKATTFLTAK</sequence>
<proteinExistence type="inferred from homology"/>
<organism>
    <name type="scientific">Listeria monocytogenes serotype 4b (strain CLIP80459)</name>
    <dbReference type="NCBI Taxonomy" id="568819"/>
    <lineage>
        <taxon>Bacteria</taxon>
        <taxon>Bacillati</taxon>
        <taxon>Bacillota</taxon>
        <taxon>Bacilli</taxon>
        <taxon>Bacillales</taxon>
        <taxon>Listeriaceae</taxon>
        <taxon>Listeria</taxon>
    </lineage>
</organism>
<accession>C1L2K1</accession>
<evidence type="ECO:0000255" key="1">
    <source>
        <dbReference type="HAMAP-Rule" id="MF_00185"/>
    </source>
</evidence>
<keyword id="KW-0067">ATP-binding</keyword>
<keyword id="KW-0460">Magnesium</keyword>
<keyword id="KW-0547">Nucleotide-binding</keyword>
<keyword id="KW-0808">Transferase</keyword>
<keyword id="KW-0819">tRNA processing</keyword>
<feature type="chain" id="PRO_1000203939" description="tRNA dimethylallyltransferase">
    <location>
        <begin position="1"/>
        <end position="305"/>
    </location>
</feature>
<feature type="region of interest" description="Interaction with substrate tRNA" evidence="1">
    <location>
        <begin position="36"/>
        <end position="39"/>
    </location>
</feature>
<feature type="binding site" evidence="1">
    <location>
        <begin position="11"/>
        <end position="18"/>
    </location>
    <ligand>
        <name>ATP</name>
        <dbReference type="ChEBI" id="CHEBI:30616"/>
    </ligand>
</feature>
<feature type="binding site" evidence="1">
    <location>
        <begin position="13"/>
        <end position="18"/>
    </location>
    <ligand>
        <name>substrate</name>
    </ligand>
</feature>
<feature type="site" description="Interaction with substrate tRNA" evidence="1">
    <location>
        <position position="102"/>
    </location>
</feature>
<feature type="site" description="Interaction with substrate tRNA" evidence="1">
    <location>
        <position position="125"/>
    </location>
</feature>
<dbReference type="EC" id="2.5.1.75" evidence="1"/>
<dbReference type="EMBL" id="FM242711">
    <property type="protein sequence ID" value="CAS05067.1"/>
    <property type="molecule type" value="Genomic_DNA"/>
</dbReference>
<dbReference type="RefSeq" id="WP_003726658.1">
    <property type="nucleotide sequence ID" value="NC_012488.1"/>
</dbReference>
<dbReference type="SMR" id="C1L2K1"/>
<dbReference type="KEGG" id="lmc:Lm4b_01303"/>
<dbReference type="HOGENOM" id="CLU_032616_0_1_9"/>
<dbReference type="GO" id="GO:0005524">
    <property type="term" value="F:ATP binding"/>
    <property type="evidence" value="ECO:0007669"/>
    <property type="project" value="UniProtKB-UniRule"/>
</dbReference>
<dbReference type="GO" id="GO:0052381">
    <property type="term" value="F:tRNA dimethylallyltransferase activity"/>
    <property type="evidence" value="ECO:0007669"/>
    <property type="project" value="UniProtKB-UniRule"/>
</dbReference>
<dbReference type="GO" id="GO:0006400">
    <property type="term" value="P:tRNA modification"/>
    <property type="evidence" value="ECO:0007669"/>
    <property type="project" value="TreeGrafter"/>
</dbReference>
<dbReference type="FunFam" id="1.10.20.140:FF:000001">
    <property type="entry name" value="tRNA dimethylallyltransferase"/>
    <property type="match status" value="1"/>
</dbReference>
<dbReference type="Gene3D" id="1.10.20.140">
    <property type="match status" value="1"/>
</dbReference>
<dbReference type="Gene3D" id="3.40.50.300">
    <property type="entry name" value="P-loop containing nucleotide triphosphate hydrolases"/>
    <property type="match status" value="1"/>
</dbReference>
<dbReference type="HAMAP" id="MF_00185">
    <property type="entry name" value="IPP_trans"/>
    <property type="match status" value="1"/>
</dbReference>
<dbReference type="InterPro" id="IPR039657">
    <property type="entry name" value="Dimethylallyltransferase"/>
</dbReference>
<dbReference type="InterPro" id="IPR018022">
    <property type="entry name" value="IPT"/>
</dbReference>
<dbReference type="InterPro" id="IPR027417">
    <property type="entry name" value="P-loop_NTPase"/>
</dbReference>
<dbReference type="NCBIfam" id="TIGR00174">
    <property type="entry name" value="miaA"/>
    <property type="match status" value="1"/>
</dbReference>
<dbReference type="PANTHER" id="PTHR11088">
    <property type="entry name" value="TRNA DIMETHYLALLYLTRANSFERASE"/>
    <property type="match status" value="1"/>
</dbReference>
<dbReference type="PANTHER" id="PTHR11088:SF60">
    <property type="entry name" value="TRNA DIMETHYLALLYLTRANSFERASE"/>
    <property type="match status" value="1"/>
</dbReference>
<dbReference type="Pfam" id="PF01715">
    <property type="entry name" value="IPPT"/>
    <property type="match status" value="1"/>
</dbReference>
<dbReference type="SUPFAM" id="SSF52540">
    <property type="entry name" value="P-loop containing nucleoside triphosphate hydrolases"/>
    <property type="match status" value="2"/>
</dbReference>
<name>MIAA_LISMC</name>
<comment type="function">
    <text evidence="1">Catalyzes the transfer of a dimethylallyl group onto the adenine at position 37 in tRNAs that read codons beginning with uridine, leading to the formation of N6-(dimethylallyl)adenosine (i(6)A).</text>
</comment>
<comment type="catalytic activity">
    <reaction evidence="1">
        <text>adenosine(37) in tRNA + dimethylallyl diphosphate = N(6)-dimethylallyladenosine(37) in tRNA + diphosphate</text>
        <dbReference type="Rhea" id="RHEA:26482"/>
        <dbReference type="Rhea" id="RHEA-COMP:10162"/>
        <dbReference type="Rhea" id="RHEA-COMP:10375"/>
        <dbReference type="ChEBI" id="CHEBI:33019"/>
        <dbReference type="ChEBI" id="CHEBI:57623"/>
        <dbReference type="ChEBI" id="CHEBI:74411"/>
        <dbReference type="ChEBI" id="CHEBI:74415"/>
        <dbReference type="EC" id="2.5.1.75"/>
    </reaction>
</comment>
<comment type="cofactor">
    <cofactor evidence="1">
        <name>Mg(2+)</name>
        <dbReference type="ChEBI" id="CHEBI:18420"/>
    </cofactor>
</comment>
<comment type="subunit">
    <text evidence="1">Monomer.</text>
</comment>
<comment type="similarity">
    <text evidence="1">Belongs to the IPP transferase family.</text>
</comment>
<reference key="1">
    <citation type="journal article" date="2012" name="BMC Genomics">
        <title>Comparative genomics and transcriptomics of lineages I, II, and III strains of Listeria monocytogenes.</title>
        <authorList>
            <person name="Hain T."/>
            <person name="Ghai R."/>
            <person name="Billion A."/>
            <person name="Kuenne C.T."/>
            <person name="Steinweg C."/>
            <person name="Izar B."/>
            <person name="Mohamed W."/>
            <person name="Mraheil M."/>
            <person name="Domann E."/>
            <person name="Schaffrath S."/>
            <person name="Karst U."/>
            <person name="Goesmann A."/>
            <person name="Oehm S."/>
            <person name="Puhler A."/>
            <person name="Merkl R."/>
            <person name="Vorwerk S."/>
            <person name="Glaser P."/>
            <person name="Garrido P."/>
            <person name="Rusniok C."/>
            <person name="Buchrieser C."/>
            <person name="Goebel W."/>
            <person name="Chakraborty T."/>
        </authorList>
    </citation>
    <scope>NUCLEOTIDE SEQUENCE [LARGE SCALE GENOMIC DNA]</scope>
    <source>
        <strain>CLIP80459</strain>
    </source>
</reference>
<gene>
    <name evidence="1" type="primary">miaA</name>
    <name type="ordered locus">Lm4b_01303</name>
</gene>